<organism>
    <name type="scientific">Cricetulus griseus</name>
    <name type="common">Chinese hamster</name>
    <name type="synonym">Cricetulus barabensis griseus</name>
    <dbReference type="NCBI Taxonomy" id="10029"/>
    <lineage>
        <taxon>Eukaryota</taxon>
        <taxon>Metazoa</taxon>
        <taxon>Chordata</taxon>
        <taxon>Craniata</taxon>
        <taxon>Vertebrata</taxon>
        <taxon>Euteleostomi</taxon>
        <taxon>Mammalia</taxon>
        <taxon>Eutheria</taxon>
        <taxon>Euarchontoglires</taxon>
        <taxon>Glires</taxon>
        <taxon>Rodentia</taxon>
        <taxon>Myomorpha</taxon>
        <taxon>Muroidea</taxon>
        <taxon>Cricetidae</taxon>
        <taxon>Cricetinae</taxon>
        <taxon>Cricetulus</taxon>
    </lineage>
</organism>
<gene>
    <name type="primary">MGAT5</name>
</gene>
<accession>P97259</accession>
<accession>P70100</accession>
<accession>P70101</accession>
<proteinExistence type="evidence at protein level"/>
<keyword id="KW-1015">Disulfide bond</keyword>
<keyword id="KW-0325">Glycoprotein</keyword>
<keyword id="KW-0328">Glycosyltransferase</keyword>
<keyword id="KW-0333">Golgi apparatus</keyword>
<keyword id="KW-0472">Membrane</keyword>
<keyword id="KW-0964">Secreted</keyword>
<keyword id="KW-0735">Signal-anchor</keyword>
<keyword id="KW-0808">Transferase</keyword>
<keyword id="KW-0812">Transmembrane</keyword>
<keyword id="KW-1133">Transmembrane helix</keyword>
<name>MGT5A_CRIGR</name>
<reference key="1">
    <citation type="journal article" date="1996" name="J. Biol. Chem.">
        <title>A point mutation causes mistargeting of Golgi GlcNAc-TV in the Lec4A Chinese hamster ovary glycosylation mutant.</title>
        <authorList>
            <person name="Weinstein J."/>
            <person name="Sundaram S."/>
            <person name="Wang X."/>
            <person name="Delgado D."/>
            <person name="Basu R."/>
            <person name="Stanley P."/>
        </authorList>
    </citation>
    <scope>NUCLEOTIDE SEQUENCE [MRNA]</scope>
    <scope>VARIANTS LEC4 AND LEC4A</scope>
    <scope>FUNCTION</scope>
    <scope>CATALYTIC ACTIVITY</scope>
    <scope>PATHWAY</scope>
    <scope>SUBCELLULAR LOCATION</scope>
</reference>
<evidence type="ECO:0000250" key="1">
    <source>
        <dbReference type="UniProtKB" id="Q09328"/>
    </source>
</evidence>
<evidence type="ECO:0000250" key="2">
    <source>
        <dbReference type="UniProtKB" id="Q8R4G6"/>
    </source>
</evidence>
<evidence type="ECO:0000255" key="3"/>
<evidence type="ECO:0000269" key="4">
    <source>
    </source>
</evidence>
<evidence type="ECO:0000305" key="5"/>
<dbReference type="EC" id="2.4.1.155" evidence="4"/>
<dbReference type="EMBL" id="U62587">
    <property type="protein sequence ID" value="AAC52925.1"/>
    <property type="molecule type" value="mRNA"/>
</dbReference>
<dbReference type="EMBL" id="U62588">
    <property type="protein sequence ID" value="AAC52926.1"/>
    <property type="molecule type" value="mRNA"/>
</dbReference>
<dbReference type="RefSeq" id="XP_007613026.1">
    <property type="nucleotide sequence ID" value="XM_007614836.2"/>
</dbReference>
<dbReference type="RefSeq" id="XP_016822211.1">
    <property type="nucleotide sequence ID" value="XM_016966722.1"/>
</dbReference>
<dbReference type="RefSeq" id="XP_016822214.1">
    <property type="nucleotide sequence ID" value="XM_016966725.1"/>
</dbReference>
<dbReference type="RefSeq" id="XP_016822216.1">
    <property type="nucleotide sequence ID" value="XM_016966727.1"/>
</dbReference>
<dbReference type="SMR" id="P97259"/>
<dbReference type="CAZy" id="GT18">
    <property type="family name" value="Glycosyltransferase Family 18"/>
</dbReference>
<dbReference type="GlyCosmos" id="P97259">
    <property type="glycosylation" value="6 sites, No reported glycans"/>
</dbReference>
<dbReference type="PaxDb" id="10029-XP_007622398.1"/>
<dbReference type="Ensembl" id="ENSCGRT00001027389.1">
    <property type="protein sequence ID" value="ENSCGRP00001023144.1"/>
    <property type="gene ID" value="ENSCGRG00001021442.1"/>
</dbReference>
<dbReference type="GeneID" id="100760162"/>
<dbReference type="CTD" id="4249"/>
<dbReference type="eggNOG" id="ENOG502QTNG">
    <property type="taxonomic scope" value="Eukaryota"/>
</dbReference>
<dbReference type="GeneTree" id="ENSGT00940000153470"/>
<dbReference type="OMA" id="HCESKLK"/>
<dbReference type="OrthoDB" id="2113294at2759"/>
<dbReference type="BRENDA" id="2.4.1.155">
    <property type="organism ID" value="1309"/>
</dbReference>
<dbReference type="UniPathway" id="UPA00378"/>
<dbReference type="Proteomes" id="UP000694386">
    <property type="component" value="Unplaced"/>
</dbReference>
<dbReference type="Proteomes" id="UP001108280">
    <property type="component" value="Unplaced"/>
</dbReference>
<dbReference type="GO" id="GO:0005576">
    <property type="term" value="C:extracellular region"/>
    <property type="evidence" value="ECO:0007669"/>
    <property type="project" value="UniProtKB-SubCell"/>
</dbReference>
<dbReference type="GO" id="GO:0000139">
    <property type="term" value="C:Golgi membrane"/>
    <property type="evidence" value="ECO:0000314"/>
    <property type="project" value="UniProtKB"/>
</dbReference>
<dbReference type="GO" id="GO:0030144">
    <property type="term" value="F:alpha-1,6-mannosylglycoprotein 6-beta-N-acetylglucosaminyltransferase activity"/>
    <property type="evidence" value="ECO:0000314"/>
    <property type="project" value="UniProtKB"/>
</dbReference>
<dbReference type="GO" id="GO:0030145">
    <property type="term" value="F:manganese ion binding"/>
    <property type="evidence" value="ECO:0000250"/>
    <property type="project" value="UniProtKB"/>
</dbReference>
<dbReference type="GO" id="GO:0004864">
    <property type="term" value="F:protein phosphatase inhibitor activity"/>
    <property type="evidence" value="ECO:0007669"/>
    <property type="project" value="Ensembl"/>
</dbReference>
<dbReference type="GO" id="GO:0030335">
    <property type="term" value="P:positive regulation of cell migration"/>
    <property type="evidence" value="ECO:0007669"/>
    <property type="project" value="Ensembl"/>
</dbReference>
<dbReference type="GO" id="GO:1904894">
    <property type="term" value="P:positive regulation of receptor signaling pathway via STAT"/>
    <property type="evidence" value="ECO:0007669"/>
    <property type="project" value="Ensembl"/>
</dbReference>
<dbReference type="GO" id="GO:0018279">
    <property type="term" value="P:protein N-linked glycosylation via asparagine"/>
    <property type="evidence" value="ECO:0000314"/>
    <property type="project" value="UniProtKB"/>
</dbReference>
<dbReference type="InterPro" id="IPR026116">
    <property type="entry name" value="GT18_cat"/>
</dbReference>
<dbReference type="InterPro" id="IPR052105">
    <property type="entry name" value="MGAT5_Glycosyltransferase"/>
</dbReference>
<dbReference type="InterPro" id="IPR027833">
    <property type="entry name" value="MGT5A-like_N"/>
</dbReference>
<dbReference type="PANTHER" id="PTHR15075:SF5">
    <property type="entry name" value="ALPHA-1,6-MANNOSYLGLYCOPROTEIN 6-BETA-N-ACETYLGLUCOSAMINYLTRANSFERASE A"/>
    <property type="match status" value="1"/>
</dbReference>
<dbReference type="PANTHER" id="PTHR15075">
    <property type="entry name" value="ALPHA-MANNOSIDE BETA-1,6-N-ACETYLGLUCOSAMINYLTRANSFERASE"/>
    <property type="match status" value="1"/>
</dbReference>
<dbReference type="Pfam" id="PF15024">
    <property type="entry name" value="Glyco_transf_18"/>
    <property type="match status" value="1"/>
</dbReference>
<dbReference type="Pfam" id="PF15027">
    <property type="entry name" value="MGT5A_N"/>
    <property type="match status" value="1"/>
</dbReference>
<protein>
    <recommendedName>
        <fullName>Alpha-1,6-mannosylglycoprotein 6-beta-N-acetylglucosaminyltransferase A</fullName>
        <ecNumber evidence="4">2.4.1.155</ecNumber>
    </recommendedName>
    <alternativeName>
        <fullName>Alpha-mannoside beta-1,6-N-acetylglucosaminyltransferase</fullName>
    </alternativeName>
    <alternativeName>
        <fullName>GlcNAc-T V</fullName>
        <shortName>GNT-V</shortName>
    </alternativeName>
    <alternativeName>
        <fullName>Mannoside acetylglucosaminyltransferase 5</fullName>
    </alternativeName>
    <alternativeName>
        <fullName>N-acetylglucosaminyl-transferase V</fullName>
    </alternativeName>
    <component>
        <recommendedName>
            <fullName evidence="5">Secreted alpha-1,6-mannosylglycoprotein 6-beta-N-acetylglucosaminyltransferase A</fullName>
        </recommendedName>
        <alternativeName>
            <fullName evidence="5">Secreted beta-1,6-N-acetylglucosaminyltransferase V</fullName>
            <shortName evidence="5">Secreted GNT-V</shortName>
        </alternativeName>
    </component>
</protein>
<comment type="function">
    <text evidence="1 2 4">Catalyzes the addition of N-acetylglucosamine (GlcNAc) in beta 1-6 linkage to the alpha-linked mannose of biantennary N-linked oligosaccharides (PubMed:8910328). Catalyzes an important step in the biosynthesis of branched, complex-type N-glycans, such as those found on EGFR, TGFR (TGF-beta receptor) and CDH2. Via its role in the biosynthesis of complex N-glycans, plays an important role in the activation of cellular signaling pathways, reorganization of the actin cytoskeleton, cell-cell adhesion and cell migration. MGAT5-dependent EGFR N-glycosylation enhances the interaction between EGFR and LGALS3 and thereby prevents rapid EGFR endocytosis and prolongs EGFR signaling. Required for efficient interaction between TGFB1 and its receptor. Enhances activation of intracellular signaling pathways by several types of growth factors, including FGF2, PDGF, IGF, TGFB1 and EGF. MGAT5-dependent CDH2 N-glycosylation inhibits CDH2-mediated homotypic cell-cell adhesion and contributes to the regulation of downstream signaling pathways. Promotes cell migration. Contributes to the regulation of the inflammatory response. MGAT5-dependent TCR N-glycosylation enhances the interaction between TCR and LGALS3, limits agonist-induced TCR clustering, and thereby dampens TCR-mediated responses to antigens. Required for normal leukocyte evasation and accumulation at sites of inflammation (By similarity). Inhibits attachment of monocytes to the vascular endothelium and subsequent monocyte diapedesis (By similarity).</text>
</comment>
<comment type="function">
    <molecule>Secreted alpha-1,6-mannosylglycoprotein 6-beta-N-acetylglucosaminyltransferase A</molecule>
    <text evidence="1">Promotes proliferation of umbilical vein endothelial cells and angiogenesis, at least in part by promoting the release of the growth factor FGF2 from the extracellular matrix.</text>
</comment>
<comment type="catalytic activity">
    <reaction evidence="4">
        <text>N(4)-{beta-D-GlcNAc-(1-&gt;2)-[beta-D-GlcNAc-(1-&gt;4)]-alpha-D-Man-(1-&gt;3)-[beta-D-GlcNAc-(1-&gt;2)-alpha-D-Man-(1-&gt;6)]-beta-D-Man-(1-&gt;4)-beta-D-GlcNAc-(1-&gt;4)-beta-D-GlcNAc}-L-asparaginyl-[protein] + UDP-N-acetyl-alpha-D-glucosamine = N(4)-{beta-D-GlcNAc-(1-&gt;2)-[beta-D-GlcNAc-(1-&gt;4)]-alpha-D-Man-(1-&gt;3)-[beta-D-GlcNAc-(1-&gt;2)-[beta-D-GlcNAc-(1-&gt;6)]-alpha-D-Man-(1-&gt;6)]-beta-D-Man-(1-&gt;4)-beta-D-GlcNAc-(1-&gt;4)-beta-D-GlcNAc}-L-asparaginyl-[protein] + UDP + H(+)</text>
        <dbReference type="Rhea" id="RHEA:16921"/>
        <dbReference type="Rhea" id="RHEA-COMP:14374"/>
        <dbReference type="Rhea" id="RHEA-COMP:14377"/>
        <dbReference type="ChEBI" id="CHEBI:15378"/>
        <dbReference type="ChEBI" id="CHEBI:57705"/>
        <dbReference type="ChEBI" id="CHEBI:58223"/>
        <dbReference type="ChEBI" id="CHEBI:139507"/>
        <dbReference type="ChEBI" id="CHEBI:139510"/>
        <dbReference type="EC" id="2.4.1.155"/>
    </reaction>
</comment>
<comment type="pathway">
    <text evidence="4">Protein modification; protein glycosylation.</text>
</comment>
<comment type="subcellular location">
    <subcellularLocation>
        <location evidence="4">Golgi apparatus membrane</location>
        <topology evidence="1">Single-pass type II membrane protein</topology>
    </subcellularLocation>
</comment>
<comment type="subcellular location">
    <molecule>Secreted alpha-1,6-mannosylglycoprotein 6-beta-N-acetylglucosaminyltransferase A</molecule>
    <subcellularLocation>
        <location evidence="1">Secreted</location>
    </subcellularLocation>
</comment>
<comment type="PTM">
    <text evidence="1">N-glycosylated.</text>
</comment>
<comment type="PTM">
    <text evidence="1">A secreted form is released from the membrane after cleavage by gamma-secretase.</text>
</comment>
<comment type="similarity">
    <text evidence="5">Belongs to the glycosyltransferase 18 family.</text>
</comment>
<feature type="chain" id="PRO_0000080521" description="Alpha-1,6-mannosylglycoprotein 6-beta-N-acetylglucosaminyltransferase A">
    <location>
        <begin position="1"/>
        <end position="740"/>
    </location>
</feature>
<feature type="chain" id="PRO_0000445691" description="Secreted alpha-1,6-mannosylglycoprotein 6-beta-N-acetylglucosaminyltransferase A" evidence="1">
    <location>
        <begin position="31"/>
        <end position="740"/>
    </location>
</feature>
<feature type="topological domain" description="Cytoplasmic" evidence="3">
    <location>
        <begin position="1"/>
        <end position="13"/>
    </location>
</feature>
<feature type="transmembrane region" description="Helical; Signal-anchor for type II membrane protein" evidence="3">
    <location>
        <begin position="14"/>
        <end position="30"/>
    </location>
</feature>
<feature type="topological domain" description="Lumenal" evidence="3">
    <location>
        <begin position="31"/>
        <end position="740"/>
    </location>
</feature>
<feature type="region of interest" description="Sufficient for catalytic activity" evidence="1">
    <location>
        <begin position="212"/>
        <end position="740"/>
    </location>
</feature>
<feature type="binding site" evidence="1">
    <location>
        <begin position="377"/>
        <end position="378"/>
    </location>
    <ligand>
        <name>substrate</name>
    </ligand>
</feature>
<feature type="binding site" evidence="1">
    <location>
        <position position="525"/>
    </location>
    <ligand>
        <name>UDP-N-acetyl-alpha-D-glucosamine</name>
        <dbReference type="ChEBI" id="CHEBI:57705"/>
    </ligand>
</feature>
<feature type="binding site" evidence="1">
    <location>
        <position position="553"/>
    </location>
    <ligand>
        <name>substrate</name>
    </ligand>
</feature>
<feature type="glycosylation site" description="N-linked (GlcNAc...) asparagine" evidence="3">
    <location>
        <position position="109"/>
    </location>
</feature>
<feature type="glycosylation site" description="N-linked (GlcNAc...) asparagine" evidence="3">
    <location>
        <position position="114"/>
    </location>
</feature>
<feature type="glycosylation site" description="N-linked (GlcNAc...) asparagine" evidence="3">
    <location>
        <position position="117"/>
    </location>
</feature>
<feature type="glycosylation site" description="N-linked (GlcNAc...) asparagine" evidence="3">
    <location>
        <position position="333"/>
    </location>
</feature>
<feature type="glycosylation site" description="N-linked (GlcNAc...) asparagine" evidence="3">
    <location>
        <position position="432"/>
    </location>
</feature>
<feature type="glycosylation site" description="N-linked (GlcNAc...) asparagine" evidence="3">
    <location>
        <position position="446"/>
    </location>
</feature>
<feature type="disulfide bond" evidence="1">
    <location>
        <begin position="144"/>
        <end position="182"/>
    </location>
</feature>
<feature type="disulfide bond" evidence="1">
    <location>
        <begin position="155"/>
        <end position="195"/>
    </location>
</feature>
<feature type="disulfide bond" evidence="1">
    <location>
        <begin position="171"/>
        <end position="337"/>
    </location>
</feature>
<feature type="disulfide bond" evidence="1">
    <location>
        <begin position="371"/>
        <end position="625"/>
    </location>
</feature>
<feature type="disulfide bond" evidence="1">
    <location>
        <begin position="648"/>
        <end position="723"/>
    </location>
</feature>
<feature type="disulfide bond" evidence="1">
    <location>
        <begin position="652"/>
        <end position="725"/>
    </location>
</feature>
<feature type="disulfide bond" evidence="1">
    <location>
        <begin position="659"/>
        <end position="712"/>
    </location>
</feature>
<feature type="disulfide bond" evidence="1">
    <location>
        <begin position="680"/>
        <end position="701"/>
    </location>
</feature>
<feature type="disulfide bond" evidence="1">
    <location>
        <begin position="736"/>
        <end position="739"/>
    </location>
</feature>
<feature type="sequence variant" description="In LEC4; loss of activity.">
    <original>DIINGVQEKCVLPPMDGYPHC</original>
    <variation>VQHPNSIGWCCPHLEWVFPVS</variation>
    <location>
        <begin position="135"/>
        <end position="155"/>
    </location>
</feature>
<feature type="sequence variant" description="In LEC4.">
    <location>
        <begin position="156"/>
        <end position="740"/>
    </location>
</feature>
<feature type="sequence variant" description="In LEC4A; loss of activity.">
    <original>L</original>
    <variation>R</variation>
    <location>
        <position position="188"/>
    </location>
</feature>
<sequence>MAFFTPWKLSSQKLGFFLVTFGFIWGMMLLHFTIQQRTQPESSSMLREQILDLSKRYIKALAEENRNVVDGPYAGVMTAYDLKKTLAVLLDNILQRIGKLESKVDNLVNGTGANSTNSTTAVPSLVSLEKISVADIINGVQEKCVLPPMDGYPHCEGKIKWMKDMWRSDPCYADYGVDGTSCSFFIYLSEVENWCPRLPWRAKNPYEEADHNSLAEIRTDFNILYSMMKKHEEFRWMRLRIRRMADAWIQAIKSLAEKQNLEKRKRKKILVHLGLLTKESGFKIAETAFSGGPLGELVQWSDLITSLYLLGHDIRISASLAELKEIMKKVVGNRSGCPTVGDRIVELIYIDIVGLAQFKKTLGPSWVHYQCMLRVLDSFGTEPEFNHASYAQSKGHKTPWGKWNLNPQQFYTMFPHTPDNSFLGFVVEQHLNSSDIHHINEIKRQNQSLVYGKVDSFWKNKKIYLDIIHTYMEVHATVYGSSTKNIPSYVKNHGILSGRDLQFLLRETKLFVGLGFPYEGPAPLEAIANGCAFLNPKFSPPKSSKNTDFFIGKPTLRELTSQHPYAEVFIGRPHVWTVDLNNREEVEDAVKAILNQKIEPYMPYEFTCEGMLQRINAFIEKQDFCHGQVMWPPLSALQVKLAEPGQSCKQVCQENQLICEPSFFQHLNKEKDLLKYRVTCQSSELYKDILVPSFYPKSKHCVLQGDLLLFSCAGAHPTHQRICPCRDFIKGQVALCKDCL</sequence>